<dbReference type="EMBL" id="KI669674">
    <property type="protein sequence ID" value="ETM98685.1"/>
    <property type="molecule type" value="Genomic_DNA"/>
</dbReference>
<dbReference type="RefSeq" id="XP_008916025.1">
    <property type="nucleotide sequence ID" value="XM_008917777.1"/>
</dbReference>
<dbReference type="SMR" id="W2PDG1"/>
<dbReference type="STRING" id="761204.W2PDG1"/>
<dbReference type="GlyCosmos" id="W2PDG1">
    <property type="glycosylation" value="2 sites, No reported glycans"/>
</dbReference>
<dbReference type="EnsemblProtists" id="ETM98685">
    <property type="protein sequence ID" value="ETM98685"/>
    <property type="gene ID" value="PPTG_19378"/>
</dbReference>
<dbReference type="GeneID" id="20188153"/>
<dbReference type="VEuPathDB" id="FungiDB:PPTG_19378"/>
<dbReference type="OMA" id="HTWNLYS"/>
<dbReference type="OrthoDB" id="19526at4783"/>
<dbReference type="Proteomes" id="UP000018817">
    <property type="component" value="Unassembled WGS sequence"/>
</dbReference>
<dbReference type="GO" id="GO:0005576">
    <property type="term" value="C:extracellular region"/>
    <property type="evidence" value="ECO:0007669"/>
    <property type="project" value="UniProtKB-SubCell"/>
</dbReference>
<dbReference type="GO" id="GO:0008810">
    <property type="term" value="F:cellulase activity"/>
    <property type="evidence" value="ECO:0007669"/>
    <property type="project" value="InterPro"/>
</dbReference>
<dbReference type="GO" id="GO:0000272">
    <property type="term" value="P:polysaccharide catabolic process"/>
    <property type="evidence" value="ECO:0007669"/>
    <property type="project" value="UniProtKB-KW"/>
</dbReference>
<dbReference type="Gene3D" id="2.60.120.180">
    <property type="match status" value="1"/>
</dbReference>
<dbReference type="InterPro" id="IPR013320">
    <property type="entry name" value="ConA-like_dom_sf"/>
</dbReference>
<dbReference type="InterPro" id="IPR013319">
    <property type="entry name" value="GH11/12"/>
</dbReference>
<dbReference type="InterPro" id="IPR002594">
    <property type="entry name" value="GH12"/>
</dbReference>
<dbReference type="PANTHER" id="PTHR34002">
    <property type="entry name" value="BLR1656 PROTEIN"/>
    <property type="match status" value="1"/>
</dbReference>
<dbReference type="PANTHER" id="PTHR34002:SF9">
    <property type="entry name" value="XYLOGLUCAN-SPECIFIC ENDO-BETA-1,4-GLUCANASE A"/>
    <property type="match status" value="1"/>
</dbReference>
<dbReference type="Pfam" id="PF01670">
    <property type="entry name" value="Glyco_hydro_12"/>
    <property type="match status" value="1"/>
</dbReference>
<dbReference type="SUPFAM" id="SSF49899">
    <property type="entry name" value="Concanavalin A-like lectins/glucanases"/>
    <property type="match status" value="1"/>
</dbReference>
<keyword id="KW-0119">Carbohydrate metabolism</keyword>
<keyword id="KW-0325">Glycoprotein</keyword>
<keyword id="KW-0326">Glycosidase</keyword>
<keyword id="KW-0378">Hydrolase</keyword>
<keyword id="KW-0624">Polysaccharide degradation</keyword>
<keyword id="KW-1185">Reference proteome</keyword>
<keyword id="KW-0964">Secreted</keyword>
<keyword id="KW-0732">Signal</keyword>
<keyword id="KW-0843">Virulence</keyword>
<comment type="function">
    <text evidence="5">Non-functional secreted XEG1-like protein that binds to host Nicotiana benthamiana apoplastic glucanase inhibitor protein GIP2 more tightly than does XEG1, thus it outcompetes XEG1 for GIP2 binding and frees functional XEG1 to support P.parasitica infection (PubMed:28082413). With XEG1, is required to elevate apoplastic sugar during P.parasitica infection (PubMed:28082413).</text>
</comment>
<comment type="subunit">
    <text evidence="5">Interacts with host apoplastic glucanase inhibitor GIP2.</text>
</comment>
<comment type="subcellular location">
    <subcellularLocation>
        <location evidence="2">Secreted</location>
    </subcellularLocation>
</comment>
<comment type="similarity">
    <text evidence="9">Belongs to the glycosyl hydrolase 12 (cellulase H) family.</text>
</comment>
<comment type="caution">
    <text evidence="5">In contrast to its ortholog from P.sojae, still has the conserved Glu residue in position 222 essential activity, but, as for P.sojae XLP1, does not show xyloglucanase activity.</text>
</comment>
<organism>
    <name type="scientific">Phytophthora nicotianae (strain INRA-310)</name>
    <name type="common">Phytophthora parasitica</name>
    <dbReference type="NCBI Taxonomy" id="761204"/>
    <lineage>
        <taxon>Eukaryota</taxon>
        <taxon>Sar</taxon>
        <taxon>Stramenopiles</taxon>
        <taxon>Oomycota</taxon>
        <taxon>Peronosporales</taxon>
        <taxon>Peronosporaceae</taxon>
        <taxon>Phytophthora</taxon>
    </lineage>
</organism>
<reference key="1">
    <citation type="submission" date="2011-12" db="EMBL/GenBank/DDBJ databases">
        <authorList>
            <consortium name="The Broad Institute Genome Sequencing Platform"/>
            <person name="Russ C."/>
            <person name="Tyler B."/>
            <person name="Panabieres F."/>
            <person name="Shan W."/>
            <person name="Tripathy S."/>
            <person name="Grunwald N."/>
            <person name="Machado M."/>
            <person name="Young S.K."/>
            <person name="Zeng Q."/>
            <person name="Gargeya S."/>
            <person name="Fitzgerald M."/>
            <person name="Haas B."/>
            <person name="Abouelleil A."/>
            <person name="Alvarado L."/>
            <person name="Arachchi H.M."/>
            <person name="Berlin A."/>
            <person name="Chapman S.B."/>
            <person name="Gearin G."/>
            <person name="Goldberg J."/>
            <person name="Griggs A."/>
            <person name="Gujja S."/>
            <person name="Hansen M."/>
            <person name="Heiman D."/>
            <person name="Howarth C."/>
            <person name="Larimer J."/>
            <person name="Lui A."/>
            <person name="MacDonald P.J.P."/>
            <person name="McCowen C."/>
            <person name="Montmayeur A."/>
            <person name="Murphy C."/>
            <person name="Neiman D."/>
            <person name="Pearson M."/>
            <person name="Priest M."/>
            <person name="Roberts A."/>
            <person name="Saif S."/>
            <person name="Shea T."/>
            <person name="Sisk P."/>
            <person name="Stolte C."/>
            <person name="Sykes S."/>
            <person name="Wortman J."/>
            <person name="Nusbaum C."/>
            <person name="Birren B."/>
        </authorList>
    </citation>
    <scope>NUCLEOTIDE SEQUENCE [LARGE SCALE GENOMIC DNA]</scope>
    <source>
        <strain>INRA-310</strain>
    </source>
</reference>
<reference key="2">
    <citation type="submission" date="2013-11" db="EMBL/GenBank/DDBJ databases">
        <title>The Genome Sequence of Phytophthora parasitica INRA-310.</title>
        <authorList>
            <consortium name="The Broad Institute Genomics Platform"/>
            <person name="Russ C."/>
            <person name="Tyler B."/>
            <person name="Panabieres F."/>
            <person name="Shan W."/>
            <person name="Tripathy S."/>
            <person name="Grunwald N."/>
            <person name="Machado M."/>
            <person name="Johnson C.S."/>
            <person name="Arredondo F."/>
            <person name="Hong C."/>
            <person name="Coffey M."/>
            <person name="Young S.K."/>
            <person name="Zeng Q."/>
            <person name="Gargeya S."/>
            <person name="Fitzgerald M."/>
            <person name="Abouelleil A."/>
            <person name="Alvarado L."/>
            <person name="Chapman S.B."/>
            <person name="Gainer-Dewar J."/>
            <person name="Goldberg J."/>
            <person name="Griggs A."/>
            <person name="Gujja S."/>
            <person name="Hansen M."/>
            <person name="Howarth C."/>
            <person name="Imamovic A."/>
            <person name="Ireland A."/>
            <person name="Larimer J."/>
            <person name="McCowan C."/>
            <person name="Murphy C."/>
            <person name="Pearson M."/>
            <person name="Poon T.W."/>
            <person name="Priest M."/>
            <person name="Roberts A."/>
            <person name="Saif S."/>
            <person name="Shea T."/>
            <person name="Sykes S."/>
            <person name="Wortman J."/>
            <person name="Nusbaum C."/>
            <person name="Birren B."/>
        </authorList>
    </citation>
    <scope>NUCLEOTIDE SEQUENCE [LARGE SCALE GENOMIC DNA]</scope>
    <source>
        <strain>INRA-310</strain>
    </source>
</reference>
<reference key="3">
    <citation type="journal article" date="2017" name="Science">
        <title>A paralogous decoy protects Phytophthora sojae apoplastic effector PsXEG1 from a host inhibitor.</title>
        <authorList>
            <person name="Ma Z."/>
            <person name="Zhu L."/>
            <person name="Song T."/>
            <person name="Wang Y."/>
            <person name="Zhang Q."/>
            <person name="Xia Y."/>
            <person name="Qiu M."/>
            <person name="Lin Y."/>
            <person name="Li H."/>
            <person name="Kong L."/>
            <person name="Fang Y."/>
            <person name="Ye W."/>
            <person name="Wang Y."/>
            <person name="Dong S."/>
            <person name="Zheng X."/>
            <person name="Tyler B.M."/>
            <person name="Wang Y."/>
        </authorList>
    </citation>
    <scope>FUNCTION</scope>
    <scope>INTERACTION WITH HOST GIP1</scope>
    <scope>DOMAIN</scope>
    <scope>MUTAGENESIS OF TRP-25; ASN-38; TRP-40; ASN-41; GLN-42; ASN-43; THR-75 AND GLN-76</scope>
</reference>
<gene>
    <name evidence="7" type="primary">XLP1</name>
    <name type="ORF">PPTG_19378</name>
</gene>
<protein>
    <recommendedName>
        <fullName>Inactive glycoside hydrolase XLP1</fullName>
    </recommendedName>
    <alternativeName>
        <fullName evidence="8">Glycoside hydrolase family 12 protein XLP1</fullName>
        <shortName evidence="8">GH12 protein XLP1</shortName>
    </alternativeName>
    <alternativeName>
        <fullName evidence="8">XEG1-like protein 1</fullName>
    </alternativeName>
</protein>
<accession>W2PDG1</accession>
<evidence type="ECO:0000250" key="1">
    <source>
        <dbReference type="UniProtKB" id="G4ZHR2"/>
    </source>
</evidence>
<evidence type="ECO:0000250" key="2">
    <source>
        <dbReference type="UniProtKB" id="G4ZHR3"/>
    </source>
</evidence>
<evidence type="ECO:0000255" key="3"/>
<evidence type="ECO:0000255" key="4">
    <source>
        <dbReference type="PROSITE-ProRule" id="PRU00498"/>
    </source>
</evidence>
<evidence type="ECO:0000269" key="5">
    <source>
    </source>
</evidence>
<evidence type="ECO:0000269" key="6">
    <source ref="2"/>
</evidence>
<evidence type="ECO:0000303" key="7">
    <source>
    </source>
</evidence>
<evidence type="ECO:0000303" key="8">
    <source ref="2"/>
</evidence>
<evidence type="ECO:0000305" key="9"/>
<proteinExistence type="evidence at protein level"/>
<feature type="signal peptide" evidence="3">
    <location>
        <begin position="1"/>
        <end position="19"/>
    </location>
</feature>
<feature type="chain" id="PRO_5004821942" description="Inactive glycoside hydrolase XLP1">
    <location>
        <begin position="20"/>
        <end position="238"/>
    </location>
</feature>
<feature type="active site" evidence="1">
    <location>
        <position position="133"/>
    </location>
</feature>
<feature type="active site" evidence="1">
    <location>
        <position position="219"/>
    </location>
</feature>
<feature type="glycosylation site" description="N-linked (GlcNAc...) asparagine" evidence="4">
    <location>
        <position position="171"/>
    </location>
</feature>
<feature type="glycosylation site" description="N-linked (GlcNAc...) asparagine" evidence="4">
    <location>
        <position position="187"/>
    </location>
</feature>
<feature type="mutagenesis site" description="Affects the binding to host GIP2 and relieves GIP2 inhibition of XEG1-induced sugar elevation; when associated with A-39, A-41, A-42, A-43, A-44, A-77 and A-78." evidence="6">
    <original>W</original>
    <variation>A</variation>
    <location>
        <position position="25"/>
    </location>
</feature>
<feature type="mutagenesis site" description="Affects the binding to host GIP2 and relieves GIP2 inhibition of XEG1-induced sugar elevation; when associated with A-26, A-41, A-42, A-43, A-44, A-77 and A-78." evidence="6">
    <original>N</original>
    <variation>A</variation>
    <location>
        <position position="38"/>
    </location>
</feature>
<feature type="mutagenesis site" description="Affects the binding to host GIP2 and relieves GIP2 inhibition of XEG1-induced sugar elevation; when associated with A-26, A-39, A42, A-43, A-44, A-77 and A-78." evidence="6">
    <original>W</original>
    <variation>A</variation>
    <location>
        <position position="40"/>
    </location>
</feature>
<feature type="mutagenesis site" description="Affects the binding to host GIP2 and relieves GIP2 inhibition of XEG1-induced sugar elevation; when associated with A-26, A-39, A-41, A-43, A-44, A-77 and A-78." evidence="6">
    <original>N</original>
    <variation>A</variation>
    <location>
        <position position="41"/>
    </location>
</feature>
<feature type="mutagenesis site" description="Affects the binding to host GIP2 and relieves GIP2 inhibition of XEG1-induced sugar elevation; when associated with A-26, A-39, A-41, A-42, A-44, A-77 and A-78." evidence="6">
    <original>Q</original>
    <variation>A</variation>
    <location>
        <position position="42"/>
    </location>
</feature>
<feature type="mutagenesis site" description="Affects the binding to host GIP2 and relieves GIP2 inhibition of XEG1-induced sugar elevation; when associated with A-26, A-39, A-41, A-42, A-43, A-77 and A-78." evidence="6">
    <original>N</original>
    <variation>A</variation>
    <location>
        <position position="43"/>
    </location>
</feature>
<feature type="mutagenesis site" description="Affects the binding to host GIP2 and relieves GIP2 inhibition of XEG1-induced sugar elevation; when associated with A-26, A-39, A-41, A-42, A-43, A-44 and A-78." evidence="6">
    <original>T</original>
    <variation>A</variation>
    <location>
        <position position="75"/>
    </location>
</feature>
<feature type="mutagenesis site" description="Affects the binding to host GIP2 and relieves GIP2 inhibition of XEG1-induced sugar elevation; when associated with A-26, A-39, A-41, A-42, A-43, A-44 and A-77." evidence="6">
    <original>Q</original>
    <variation>A</variation>
    <location>
        <position position="76"/>
    </location>
</feature>
<sequence>MKSFLIAIVIAVLLPVSAADFCAQWRLSKAGKYIIYNNLWNQNTATSGSQCTGVDKVSGSTVAWHTSYSWAGAPTQVKSYSNAALVFTKKQIKNIKTIPTTMKYSYSYSGTLIADVAYDLFTSSTASGSNEYEIMIWLAAYGGAGPISSTGKAIATVTINSNSFKLYKGPNGSTTVYSFVATKTITNFSADLLDFFTYLVKTQAFPSSQYLTTLEAGTEPFTGSNAKMTVSSYSAAVN</sequence>
<name>XLP1_PHYN3</name>